<accession>Q3Z2W2</accession>
<name>NHAB_SHISS</name>
<dbReference type="EMBL" id="CP000038">
    <property type="protein sequence ID" value="AAZ87900.1"/>
    <property type="molecule type" value="Genomic_DNA"/>
</dbReference>
<dbReference type="RefSeq" id="WP_000406387.1">
    <property type="nucleotide sequence ID" value="NC_007384.1"/>
</dbReference>
<dbReference type="SMR" id="Q3Z2W2"/>
<dbReference type="GeneID" id="93776246"/>
<dbReference type="KEGG" id="ssn:SSON_1178"/>
<dbReference type="HOGENOM" id="CLU_041110_0_0_6"/>
<dbReference type="Proteomes" id="UP000002529">
    <property type="component" value="Chromosome"/>
</dbReference>
<dbReference type="GO" id="GO:0005886">
    <property type="term" value="C:plasma membrane"/>
    <property type="evidence" value="ECO:0007669"/>
    <property type="project" value="UniProtKB-SubCell"/>
</dbReference>
<dbReference type="GO" id="GO:0015385">
    <property type="term" value="F:sodium:proton antiporter activity"/>
    <property type="evidence" value="ECO:0007669"/>
    <property type="project" value="InterPro"/>
</dbReference>
<dbReference type="HAMAP" id="MF_01599">
    <property type="entry name" value="NhaB"/>
    <property type="match status" value="1"/>
</dbReference>
<dbReference type="InterPro" id="IPR004671">
    <property type="entry name" value="Na+/H+_antiporter_NhaB"/>
</dbReference>
<dbReference type="NCBIfam" id="TIGR00774">
    <property type="entry name" value="NhaB"/>
    <property type="match status" value="1"/>
</dbReference>
<dbReference type="NCBIfam" id="NF007093">
    <property type="entry name" value="PRK09547.1"/>
    <property type="match status" value="1"/>
</dbReference>
<dbReference type="PANTHER" id="PTHR43302:SF1">
    <property type="entry name" value="NA(+)_H(+) ANTIPORTER NHAB"/>
    <property type="match status" value="1"/>
</dbReference>
<dbReference type="PANTHER" id="PTHR43302">
    <property type="entry name" value="TRANSPORTER ARSB-RELATED"/>
    <property type="match status" value="1"/>
</dbReference>
<dbReference type="Pfam" id="PF06450">
    <property type="entry name" value="NhaB"/>
    <property type="match status" value="1"/>
</dbReference>
<feature type="chain" id="PRO_0000333143" description="Na(+)/H(+) antiporter NhaB">
    <location>
        <begin position="1"/>
        <end position="513"/>
    </location>
</feature>
<feature type="transmembrane region" description="Helical" evidence="1">
    <location>
        <begin position="23"/>
        <end position="43"/>
    </location>
</feature>
<feature type="transmembrane region" description="Helical" evidence="1">
    <location>
        <begin position="52"/>
        <end position="72"/>
    </location>
</feature>
<feature type="transmembrane region" description="Helical" evidence="1">
    <location>
        <begin position="97"/>
        <end position="117"/>
    </location>
</feature>
<feature type="transmembrane region" description="Helical" evidence="1">
    <location>
        <begin position="120"/>
        <end position="140"/>
    </location>
</feature>
<feature type="transmembrane region" description="Helical" evidence="1">
    <location>
        <begin position="144"/>
        <end position="164"/>
    </location>
</feature>
<feature type="transmembrane region" description="Helical" evidence="1">
    <location>
        <begin position="202"/>
        <end position="222"/>
    </location>
</feature>
<feature type="transmembrane region" description="Helical" evidence="1">
    <location>
        <begin position="238"/>
        <end position="258"/>
    </location>
</feature>
<feature type="transmembrane region" description="Helical" evidence="1">
    <location>
        <begin position="303"/>
        <end position="323"/>
    </location>
</feature>
<feature type="transmembrane region" description="Helical" evidence="1">
    <location>
        <begin position="348"/>
        <end position="368"/>
    </location>
</feature>
<feature type="transmembrane region" description="Helical" evidence="1">
    <location>
        <begin position="391"/>
        <end position="411"/>
    </location>
</feature>
<feature type="transmembrane region" description="Helical" evidence="1">
    <location>
        <begin position="447"/>
        <end position="467"/>
    </location>
</feature>
<feature type="transmembrane region" description="Helical" evidence="1">
    <location>
        <begin position="475"/>
        <end position="495"/>
    </location>
</feature>
<protein>
    <recommendedName>
        <fullName evidence="1">Na(+)/H(+) antiporter NhaB</fullName>
    </recommendedName>
    <alternativeName>
        <fullName evidence="1">Sodium/proton antiporter NhaB</fullName>
    </alternativeName>
</protein>
<reference key="1">
    <citation type="journal article" date="2005" name="Nucleic Acids Res.">
        <title>Genome dynamics and diversity of Shigella species, the etiologic agents of bacillary dysentery.</title>
        <authorList>
            <person name="Yang F."/>
            <person name="Yang J."/>
            <person name="Zhang X."/>
            <person name="Chen L."/>
            <person name="Jiang Y."/>
            <person name="Yan Y."/>
            <person name="Tang X."/>
            <person name="Wang J."/>
            <person name="Xiong Z."/>
            <person name="Dong J."/>
            <person name="Xue Y."/>
            <person name="Zhu Y."/>
            <person name="Xu X."/>
            <person name="Sun L."/>
            <person name="Chen S."/>
            <person name="Nie H."/>
            <person name="Peng J."/>
            <person name="Xu J."/>
            <person name="Wang Y."/>
            <person name="Yuan Z."/>
            <person name="Wen Y."/>
            <person name="Yao Z."/>
            <person name="Shen Y."/>
            <person name="Qiang B."/>
            <person name="Hou Y."/>
            <person name="Yu J."/>
            <person name="Jin Q."/>
        </authorList>
    </citation>
    <scope>NUCLEOTIDE SEQUENCE [LARGE SCALE GENOMIC DNA]</scope>
    <source>
        <strain>Ss046</strain>
    </source>
</reference>
<organism>
    <name type="scientific">Shigella sonnei (strain Ss046)</name>
    <dbReference type="NCBI Taxonomy" id="300269"/>
    <lineage>
        <taxon>Bacteria</taxon>
        <taxon>Pseudomonadati</taxon>
        <taxon>Pseudomonadota</taxon>
        <taxon>Gammaproteobacteria</taxon>
        <taxon>Enterobacterales</taxon>
        <taxon>Enterobacteriaceae</taxon>
        <taxon>Shigella</taxon>
    </lineage>
</organism>
<sequence>MEISWGRALWRNFLGQSPDWYKLALIIFLIVNPLIFLISPFVAGWLLVAEFIFTLAMALKCYPLLPGGLLAIEAVFIGMTSAEHVREEVAANLEVLLLLMFMVAGIYFMKQLLLFIFTRLLLSIRSKMLLSLSFCVAAAFLSAFLDALTVVAVVISVAVGFYGIYHRVASSRTEDTDLQDDSHIDKHYKVVLEQFRGFLRSLMMHAGVGTALGGVMTMVGEPQNLIIAKAAGWHFGDFFLRMSPVTVPVLICGLLTCLLVEKLRWFGYGETLPEKVREVLQQFDDQSRHQRTRQDKIRLIVQAIIGVWLVTALALHLAEVGLIGLSVIILATSLIGVTDEHAIGKAFTESLPFTALLTVFFSVVAVIIDQQLFSPIIQFVLQASEHAQLSLFYIFNGLLSSISDNVFVGTIYINEAKAAMESGAITLKQYELLAVAINTGTNLPSVATPNGQAAFLFLLTSALAPLIRLSYGRMVWMALPYTLVLTLVGLLCVEFTLAPVTEWFMQMGWIATL</sequence>
<proteinExistence type="inferred from homology"/>
<evidence type="ECO:0000255" key="1">
    <source>
        <dbReference type="HAMAP-Rule" id="MF_01599"/>
    </source>
</evidence>
<keyword id="KW-0050">Antiport</keyword>
<keyword id="KW-0997">Cell inner membrane</keyword>
<keyword id="KW-1003">Cell membrane</keyword>
<keyword id="KW-0406">Ion transport</keyword>
<keyword id="KW-0472">Membrane</keyword>
<keyword id="KW-1185">Reference proteome</keyword>
<keyword id="KW-0915">Sodium</keyword>
<keyword id="KW-0739">Sodium transport</keyword>
<keyword id="KW-0812">Transmembrane</keyword>
<keyword id="KW-1133">Transmembrane helix</keyword>
<keyword id="KW-0813">Transport</keyword>
<gene>
    <name evidence="1" type="primary">nhaB</name>
    <name type="ordered locus">SSON_1178</name>
</gene>
<comment type="function">
    <text evidence="1">Na(+)/H(+) antiporter that extrudes sodium in exchange for external protons.</text>
</comment>
<comment type="catalytic activity">
    <reaction evidence="1">
        <text>2 Na(+)(in) + 3 H(+)(out) = 2 Na(+)(out) + 3 H(+)(in)</text>
        <dbReference type="Rhea" id="RHEA:29247"/>
        <dbReference type="ChEBI" id="CHEBI:15378"/>
        <dbReference type="ChEBI" id="CHEBI:29101"/>
    </reaction>
    <physiologicalReaction direction="left-to-right" evidence="1">
        <dbReference type="Rhea" id="RHEA:29248"/>
    </physiologicalReaction>
</comment>
<comment type="subcellular location">
    <subcellularLocation>
        <location evidence="1">Cell inner membrane</location>
        <topology evidence="1">Multi-pass membrane protein</topology>
    </subcellularLocation>
</comment>
<comment type="similarity">
    <text evidence="1">Belongs to the NhaB Na(+)/H(+) (TC 2.A.34) antiporter family.</text>
</comment>